<proteinExistence type="inferred from homology"/>
<feature type="chain" id="PRO_1000054320" description="CCA-adding enzyme">
    <location>
        <begin position="1"/>
        <end position="368"/>
    </location>
</feature>
<feature type="binding site" evidence="1">
    <location>
        <position position="8"/>
    </location>
    <ligand>
        <name>ATP</name>
        <dbReference type="ChEBI" id="CHEBI:30616"/>
    </ligand>
</feature>
<feature type="binding site" evidence="1">
    <location>
        <position position="8"/>
    </location>
    <ligand>
        <name>CTP</name>
        <dbReference type="ChEBI" id="CHEBI:37563"/>
    </ligand>
</feature>
<feature type="binding site" evidence="1">
    <location>
        <position position="11"/>
    </location>
    <ligand>
        <name>ATP</name>
        <dbReference type="ChEBI" id="CHEBI:30616"/>
    </ligand>
</feature>
<feature type="binding site" evidence="1">
    <location>
        <position position="11"/>
    </location>
    <ligand>
        <name>CTP</name>
        <dbReference type="ChEBI" id="CHEBI:37563"/>
    </ligand>
</feature>
<feature type="binding site" evidence="1">
    <location>
        <position position="21"/>
    </location>
    <ligand>
        <name>Mg(2+)</name>
        <dbReference type="ChEBI" id="CHEBI:18420"/>
    </ligand>
</feature>
<feature type="binding site" evidence="1">
    <location>
        <position position="23"/>
    </location>
    <ligand>
        <name>Mg(2+)</name>
        <dbReference type="ChEBI" id="CHEBI:18420"/>
    </ligand>
</feature>
<feature type="binding site" evidence="1">
    <location>
        <position position="91"/>
    </location>
    <ligand>
        <name>ATP</name>
        <dbReference type="ChEBI" id="CHEBI:30616"/>
    </ligand>
</feature>
<feature type="binding site" evidence="1">
    <location>
        <position position="91"/>
    </location>
    <ligand>
        <name>CTP</name>
        <dbReference type="ChEBI" id="CHEBI:37563"/>
    </ligand>
</feature>
<feature type="binding site" evidence="1">
    <location>
        <position position="137"/>
    </location>
    <ligand>
        <name>ATP</name>
        <dbReference type="ChEBI" id="CHEBI:30616"/>
    </ligand>
</feature>
<feature type="binding site" evidence="1">
    <location>
        <position position="137"/>
    </location>
    <ligand>
        <name>CTP</name>
        <dbReference type="ChEBI" id="CHEBI:37563"/>
    </ligand>
</feature>
<feature type="binding site" evidence="1">
    <location>
        <position position="140"/>
    </location>
    <ligand>
        <name>ATP</name>
        <dbReference type="ChEBI" id="CHEBI:30616"/>
    </ligand>
</feature>
<feature type="binding site" evidence="1">
    <location>
        <position position="140"/>
    </location>
    <ligand>
        <name>CTP</name>
        <dbReference type="ChEBI" id="CHEBI:37563"/>
    </ligand>
</feature>
<evidence type="ECO:0000255" key="1">
    <source>
        <dbReference type="HAMAP-Rule" id="MF_01262"/>
    </source>
</evidence>
<organism>
    <name type="scientific">Pseudomonas putida (strain ATCC 700007 / DSM 6899 / JCM 31910 / BCRC 17059 / LMG 24140 / F1)</name>
    <dbReference type="NCBI Taxonomy" id="351746"/>
    <lineage>
        <taxon>Bacteria</taxon>
        <taxon>Pseudomonadati</taxon>
        <taxon>Pseudomonadota</taxon>
        <taxon>Gammaproteobacteria</taxon>
        <taxon>Pseudomonadales</taxon>
        <taxon>Pseudomonadaceae</taxon>
        <taxon>Pseudomonas</taxon>
    </lineage>
</organism>
<reference key="1">
    <citation type="submission" date="2007-05" db="EMBL/GenBank/DDBJ databases">
        <title>Complete sequence of Pseudomonas putida F1.</title>
        <authorList>
            <consortium name="US DOE Joint Genome Institute"/>
            <person name="Copeland A."/>
            <person name="Lucas S."/>
            <person name="Lapidus A."/>
            <person name="Barry K."/>
            <person name="Detter J.C."/>
            <person name="Glavina del Rio T."/>
            <person name="Hammon N."/>
            <person name="Israni S."/>
            <person name="Dalin E."/>
            <person name="Tice H."/>
            <person name="Pitluck S."/>
            <person name="Chain P."/>
            <person name="Malfatti S."/>
            <person name="Shin M."/>
            <person name="Vergez L."/>
            <person name="Schmutz J."/>
            <person name="Larimer F."/>
            <person name="Land M."/>
            <person name="Hauser L."/>
            <person name="Kyrpides N."/>
            <person name="Lykidis A."/>
            <person name="Parales R."/>
            <person name="Richardson P."/>
        </authorList>
    </citation>
    <scope>NUCLEOTIDE SEQUENCE [LARGE SCALE GENOMIC DNA]</scope>
    <source>
        <strain>ATCC 700007 / DSM 6899 / JCM 31910 / BCRC 17059 / LMG 24140 / F1</strain>
    </source>
</reference>
<gene>
    <name evidence="1" type="primary">cca</name>
    <name type="ordered locus">Pput_0428</name>
</gene>
<sequence>MHIYKVGGAVRDRLLGRPVSDIDWLVVGATVEEMLAKGYRPVGADFPVFLHPKTGEEYALARTERKSGRGYGGFTFHASPDVTLEEDLIRRDLTINAMAEDEAGTVYDPYQGKQDLDKRLLRHVSPAFAEDPLRVLRVARFAARYAPLGFRVADETLALMRQISASGELQALTAERSWKEIERALMEVQPQVFFKVLSACGALQELLPELDDSSRTLAALEQAAVHEQPLHVRWACLLRGLSPTSIKAVNQRLKAPRECQELAMLTGECLAQGNQALELPATALLELLQKFDVYRRPQRFEDFLVVCEMAARGDGEQGYPQADYLRRAAAAARAVDVKPLVQAGLTGQALGEALKGERLKALEAYQRG</sequence>
<keyword id="KW-0067">ATP-binding</keyword>
<keyword id="KW-0460">Magnesium</keyword>
<keyword id="KW-0479">Metal-binding</keyword>
<keyword id="KW-0547">Nucleotide-binding</keyword>
<keyword id="KW-0548">Nucleotidyltransferase</keyword>
<keyword id="KW-0692">RNA repair</keyword>
<keyword id="KW-0694">RNA-binding</keyword>
<keyword id="KW-0808">Transferase</keyword>
<keyword id="KW-0819">tRNA processing</keyword>
<name>CCA_PSEP1</name>
<accession>A5VXI8</accession>
<dbReference type="EC" id="2.7.7.72" evidence="1"/>
<dbReference type="EMBL" id="CP000712">
    <property type="protein sequence ID" value="ABQ76598.1"/>
    <property type="molecule type" value="Genomic_DNA"/>
</dbReference>
<dbReference type="SMR" id="A5VXI8"/>
<dbReference type="KEGG" id="ppf:Pput_0428"/>
<dbReference type="eggNOG" id="COG0617">
    <property type="taxonomic scope" value="Bacteria"/>
</dbReference>
<dbReference type="HOGENOM" id="CLU_015961_1_0_6"/>
<dbReference type="GO" id="GO:0005524">
    <property type="term" value="F:ATP binding"/>
    <property type="evidence" value="ECO:0007669"/>
    <property type="project" value="UniProtKB-UniRule"/>
</dbReference>
<dbReference type="GO" id="GO:0004810">
    <property type="term" value="F:CCA tRNA nucleotidyltransferase activity"/>
    <property type="evidence" value="ECO:0007669"/>
    <property type="project" value="UniProtKB-UniRule"/>
</dbReference>
<dbReference type="GO" id="GO:0000287">
    <property type="term" value="F:magnesium ion binding"/>
    <property type="evidence" value="ECO:0007669"/>
    <property type="project" value="UniProtKB-UniRule"/>
</dbReference>
<dbReference type="GO" id="GO:0000049">
    <property type="term" value="F:tRNA binding"/>
    <property type="evidence" value="ECO:0007669"/>
    <property type="project" value="UniProtKB-UniRule"/>
</dbReference>
<dbReference type="GO" id="GO:0042245">
    <property type="term" value="P:RNA repair"/>
    <property type="evidence" value="ECO:0007669"/>
    <property type="project" value="UniProtKB-KW"/>
</dbReference>
<dbReference type="GO" id="GO:0001680">
    <property type="term" value="P:tRNA 3'-terminal CCA addition"/>
    <property type="evidence" value="ECO:0007669"/>
    <property type="project" value="UniProtKB-UniRule"/>
</dbReference>
<dbReference type="CDD" id="cd05398">
    <property type="entry name" value="NT_ClassII-CCAase"/>
    <property type="match status" value="1"/>
</dbReference>
<dbReference type="Gene3D" id="3.30.460.10">
    <property type="entry name" value="Beta Polymerase, domain 2"/>
    <property type="match status" value="1"/>
</dbReference>
<dbReference type="Gene3D" id="1.10.3090.10">
    <property type="entry name" value="cca-adding enzyme, domain 2"/>
    <property type="match status" value="1"/>
</dbReference>
<dbReference type="HAMAP" id="MF_01262">
    <property type="entry name" value="CCA_bact_type2"/>
    <property type="match status" value="1"/>
</dbReference>
<dbReference type="InterPro" id="IPR012006">
    <property type="entry name" value="CCA_bact"/>
</dbReference>
<dbReference type="InterPro" id="IPR043519">
    <property type="entry name" value="NT_sf"/>
</dbReference>
<dbReference type="InterPro" id="IPR002646">
    <property type="entry name" value="PolA_pol_head_dom"/>
</dbReference>
<dbReference type="InterPro" id="IPR032828">
    <property type="entry name" value="PolyA_RNA-bd"/>
</dbReference>
<dbReference type="InterPro" id="IPR050124">
    <property type="entry name" value="tRNA_CCA-adding_enzyme"/>
</dbReference>
<dbReference type="PANTHER" id="PTHR47545">
    <property type="entry name" value="MULTIFUNCTIONAL CCA PROTEIN"/>
    <property type="match status" value="1"/>
</dbReference>
<dbReference type="PANTHER" id="PTHR47545:SF1">
    <property type="entry name" value="MULTIFUNCTIONAL CCA PROTEIN"/>
    <property type="match status" value="1"/>
</dbReference>
<dbReference type="Pfam" id="PF01743">
    <property type="entry name" value="PolyA_pol"/>
    <property type="match status" value="1"/>
</dbReference>
<dbReference type="Pfam" id="PF12627">
    <property type="entry name" value="PolyA_pol_RNAbd"/>
    <property type="match status" value="1"/>
</dbReference>
<dbReference type="PIRSF" id="PIRSF000813">
    <property type="entry name" value="CCA_bact"/>
    <property type="match status" value="1"/>
</dbReference>
<dbReference type="SUPFAM" id="SSF81301">
    <property type="entry name" value="Nucleotidyltransferase"/>
    <property type="match status" value="1"/>
</dbReference>
<dbReference type="SUPFAM" id="SSF81891">
    <property type="entry name" value="Poly A polymerase C-terminal region-like"/>
    <property type="match status" value="1"/>
</dbReference>
<protein>
    <recommendedName>
        <fullName evidence="1">CCA-adding enzyme</fullName>
        <ecNumber evidence="1">2.7.7.72</ecNumber>
    </recommendedName>
    <alternativeName>
        <fullName evidence="1">CCA tRNA nucleotidyltransferase</fullName>
    </alternativeName>
    <alternativeName>
        <fullName evidence="1">tRNA CCA-pyrophosphorylase</fullName>
    </alternativeName>
    <alternativeName>
        <fullName evidence="1">tRNA adenylyl-/cytidylyl- transferase</fullName>
    </alternativeName>
    <alternativeName>
        <fullName evidence="1">tRNA nucleotidyltransferase</fullName>
    </alternativeName>
    <alternativeName>
        <fullName evidence="1">tRNA-NT</fullName>
    </alternativeName>
</protein>
<comment type="function">
    <text evidence="1">Catalyzes the addition and repair of the essential 3'-terminal CCA sequence in tRNAs without using a nucleic acid template. Adds these three nucleotides in the order of C, C, and A to the tRNA nucleotide-73, using CTP and ATP as substrates and producing inorganic pyrophosphate. tRNA 3'-terminal CCA addition is required both for tRNA processing and repair. Also involved in tRNA surveillance by mediating tandem CCA addition to generate a CCACCA at the 3' terminus of unstable tRNAs. While stable tRNAs receive only 3'-terminal CCA, unstable tRNAs are marked with CCACCA and rapidly degraded.</text>
</comment>
<comment type="catalytic activity">
    <reaction evidence="1">
        <text>a tRNA precursor + 2 CTP + ATP = a tRNA with a 3' CCA end + 3 diphosphate</text>
        <dbReference type="Rhea" id="RHEA:14433"/>
        <dbReference type="Rhea" id="RHEA-COMP:10465"/>
        <dbReference type="Rhea" id="RHEA-COMP:10468"/>
        <dbReference type="ChEBI" id="CHEBI:30616"/>
        <dbReference type="ChEBI" id="CHEBI:33019"/>
        <dbReference type="ChEBI" id="CHEBI:37563"/>
        <dbReference type="ChEBI" id="CHEBI:74896"/>
        <dbReference type="ChEBI" id="CHEBI:83071"/>
        <dbReference type="EC" id="2.7.7.72"/>
    </reaction>
</comment>
<comment type="catalytic activity">
    <reaction evidence="1">
        <text>a tRNA with a 3' CCA end + 2 CTP + ATP = a tRNA with a 3' CCACCA end + 3 diphosphate</text>
        <dbReference type="Rhea" id="RHEA:76235"/>
        <dbReference type="Rhea" id="RHEA-COMP:10468"/>
        <dbReference type="Rhea" id="RHEA-COMP:18655"/>
        <dbReference type="ChEBI" id="CHEBI:30616"/>
        <dbReference type="ChEBI" id="CHEBI:33019"/>
        <dbReference type="ChEBI" id="CHEBI:37563"/>
        <dbReference type="ChEBI" id="CHEBI:83071"/>
        <dbReference type="ChEBI" id="CHEBI:195187"/>
    </reaction>
    <physiologicalReaction direction="left-to-right" evidence="1">
        <dbReference type="Rhea" id="RHEA:76236"/>
    </physiologicalReaction>
</comment>
<comment type="cofactor">
    <cofactor evidence="1">
        <name>Mg(2+)</name>
        <dbReference type="ChEBI" id="CHEBI:18420"/>
    </cofactor>
</comment>
<comment type="miscellaneous">
    <text evidence="1">A single active site specifically recognizes both ATP and CTP and is responsible for their addition.</text>
</comment>
<comment type="similarity">
    <text evidence="1">Belongs to the tRNA nucleotidyltransferase/poly(A) polymerase family. Bacterial CCA-adding enzyme type 2 subfamily.</text>
</comment>